<keyword id="KW-1185">Reference proteome</keyword>
<keyword id="KW-0678">Repressor</keyword>
<keyword id="KW-0687">Ribonucleoprotein</keyword>
<keyword id="KW-0689">Ribosomal protein</keyword>
<keyword id="KW-0694">RNA-binding</keyword>
<keyword id="KW-0699">rRNA-binding</keyword>
<keyword id="KW-0810">Translation regulation</keyword>
<keyword id="KW-0820">tRNA-binding</keyword>
<reference key="1">
    <citation type="submission" date="2005-08" db="EMBL/GenBank/DDBJ databases">
        <title>Complete sequence of Synechococcus sp. CC9902.</title>
        <authorList>
            <person name="Copeland A."/>
            <person name="Lucas S."/>
            <person name="Lapidus A."/>
            <person name="Barry K."/>
            <person name="Detter J.C."/>
            <person name="Glavina T."/>
            <person name="Hammon N."/>
            <person name="Israni S."/>
            <person name="Pitluck S."/>
            <person name="Martinez M."/>
            <person name="Schmutz J."/>
            <person name="Larimer F."/>
            <person name="Land M."/>
            <person name="Kyrpides N."/>
            <person name="Ivanova N."/>
            <person name="Richardson P."/>
        </authorList>
    </citation>
    <scope>NUCLEOTIDE SEQUENCE [LARGE SCALE GENOMIC DNA]</scope>
    <source>
        <strain>CC9902</strain>
    </source>
</reference>
<organism>
    <name type="scientific">Synechococcus sp. (strain CC9902)</name>
    <dbReference type="NCBI Taxonomy" id="316279"/>
    <lineage>
        <taxon>Bacteria</taxon>
        <taxon>Bacillati</taxon>
        <taxon>Cyanobacteriota</taxon>
        <taxon>Cyanophyceae</taxon>
        <taxon>Synechococcales</taxon>
        <taxon>Synechococcaceae</taxon>
        <taxon>Synechococcus</taxon>
    </lineage>
</organism>
<gene>
    <name evidence="1" type="primary">rplA</name>
    <name evidence="1" type="synonym">rpl1</name>
    <name type="ordered locus">Syncc9902_2155</name>
</gene>
<sequence length="235" mass="25158">MPKLSKRLAGLASKIEDRTYGPLEAIALVKDNANAKFDETMEAHVRLGIDPKYTDQQLRTTVALPNGTGQTVRIAVVTSGEKVAAAKAAGAELAGDEDLVEAISKGEMNFDLLIATPDMMPKVAKLGRVLGPRGLMPNPKAGTVTTDLAAAIKDFKAGKLEFRADRTGIVHVRFGKASFTADALLENLKTLQETIDRNKPSGAKGRYWKSLYVTSTMGPSVEVDFSALQEIGQEG</sequence>
<proteinExistence type="inferred from homology"/>
<comment type="function">
    <text evidence="1">Binds directly to 23S rRNA. The L1 stalk is quite mobile in the ribosome, and is involved in E site tRNA release.</text>
</comment>
<comment type="function">
    <text evidence="1">Protein L1 is also a translational repressor protein, it controls the translation of the L11 operon by binding to its mRNA.</text>
</comment>
<comment type="subunit">
    <text evidence="1">Part of the 50S ribosomal subunit.</text>
</comment>
<comment type="similarity">
    <text evidence="1">Belongs to the universal ribosomal protein uL1 family.</text>
</comment>
<protein>
    <recommendedName>
        <fullName evidence="1">Large ribosomal subunit protein uL1</fullName>
    </recommendedName>
    <alternativeName>
        <fullName evidence="2">50S ribosomal protein L1</fullName>
    </alternativeName>
</protein>
<accession>Q3AUJ6</accession>
<dbReference type="EMBL" id="CP000097">
    <property type="protein sequence ID" value="ABB27113.1"/>
    <property type="molecule type" value="Genomic_DNA"/>
</dbReference>
<dbReference type="RefSeq" id="WP_011360895.1">
    <property type="nucleotide sequence ID" value="NC_007513.1"/>
</dbReference>
<dbReference type="SMR" id="Q3AUJ6"/>
<dbReference type="STRING" id="316279.Syncc9902_2155"/>
<dbReference type="KEGG" id="sye:Syncc9902_2155"/>
<dbReference type="eggNOG" id="COG0081">
    <property type="taxonomic scope" value="Bacteria"/>
</dbReference>
<dbReference type="HOGENOM" id="CLU_062853_0_0_3"/>
<dbReference type="OrthoDB" id="9803740at2"/>
<dbReference type="Proteomes" id="UP000002712">
    <property type="component" value="Chromosome"/>
</dbReference>
<dbReference type="GO" id="GO:0015934">
    <property type="term" value="C:large ribosomal subunit"/>
    <property type="evidence" value="ECO:0007669"/>
    <property type="project" value="InterPro"/>
</dbReference>
<dbReference type="GO" id="GO:0019843">
    <property type="term" value="F:rRNA binding"/>
    <property type="evidence" value="ECO:0007669"/>
    <property type="project" value="UniProtKB-UniRule"/>
</dbReference>
<dbReference type="GO" id="GO:0003735">
    <property type="term" value="F:structural constituent of ribosome"/>
    <property type="evidence" value="ECO:0007669"/>
    <property type="project" value="InterPro"/>
</dbReference>
<dbReference type="GO" id="GO:0000049">
    <property type="term" value="F:tRNA binding"/>
    <property type="evidence" value="ECO:0007669"/>
    <property type="project" value="UniProtKB-KW"/>
</dbReference>
<dbReference type="GO" id="GO:0006417">
    <property type="term" value="P:regulation of translation"/>
    <property type="evidence" value="ECO:0007669"/>
    <property type="project" value="UniProtKB-KW"/>
</dbReference>
<dbReference type="GO" id="GO:0006412">
    <property type="term" value="P:translation"/>
    <property type="evidence" value="ECO:0007669"/>
    <property type="project" value="UniProtKB-UniRule"/>
</dbReference>
<dbReference type="CDD" id="cd00403">
    <property type="entry name" value="Ribosomal_L1"/>
    <property type="match status" value="1"/>
</dbReference>
<dbReference type="FunFam" id="3.40.50.790:FF:000001">
    <property type="entry name" value="50S ribosomal protein L1"/>
    <property type="match status" value="1"/>
</dbReference>
<dbReference type="Gene3D" id="3.30.190.20">
    <property type="match status" value="1"/>
</dbReference>
<dbReference type="Gene3D" id="3.40.50.790">
    <property type="match status" value="1"/>
</dbReference>
<dbReference type="HAMAP" id="MF_01318_B">
    <property type="entry name" value="Ribosomal_uL1_B"/>
    <property type="match status" value="1"/>
</dbReference>
<dbReference type="InterPro" id="IPR005878">
    <property type="entry name" value="Ribosom_uL1_bac-type"/>
</dbReference>
<dbReference type="InterPro" id="IPR002143">
    <property type="entry name" value="Ribosomal_uL1"/>
</dbReference>
<dbReference type="InterPro" id="IPR023674">
    <property type="entry name" value="Ribosomal_uL1-like"/>
</dbReference>
<dbReference type="InterPro" id="IPR028364">
    <property type="entry name" value="Ribosomal_uL1/biogenesis"/>
</dbReference>
<dbReference type="InterPro" id="IPR016095">
    <property type="entry name" value="Ribosomal_uL1_3-a/b-sand"/>
</dbReference>
<dbReference type="InterPro" id="IPR023673">
    <property type="entry name" value="Ribosomal_uL1_CS"/>
</dbReference>
<dbReference type="NCBIfam" id="TIGR01169">
    <property type="entry name" value="rplA_bact"/>
    <property type="match status" value="1"/>
</dbReference>
<dbReference type="PANTHER" id="PTHR36427">
    <property type="entry name" value="54S RIBOSOMAL PROTEIN L1, MITOCHONDRIAL"/>
    <property type="match status" value="1"/>
</dbReference>
<dbReference type="PANTHER" id="PTHR36427:SF3">
    <property type="entry name" value="LARGE RIBOSOMAL SUBUNIT PROTEIN UL1M"/>
    <property type="match status" value="1"/>
</dbReference>
<dbReference type="Pfam" id="PF00687">
    <property type="entry name" value="Ribosomal_L1"/>
    <property type="match status" value="1"/>
</dbReference>
<dbReference type="PIRSF" id="PIRSF002155">
    <property type="entry name" value="Ribosomal_L1"/>
    <property type="match status" value="1"/>
</dbReference>
<dbReference type="SUPFAM" id="SSF56808">
    <property type="entry name" value="Ribosomal protein L1"/>
    <property type="match status" value="1"/>
</dbReference>
<dbReference type="PROSITE" id="PS01199">
    <property type="entry name" value="RIBOSOMAL_L1"/>
    <property type="match status" value="1"/>
</dbReference>
<name>RL1_SYNS9</name>
<evidence type="ECO:0000255" key="1">
    <source>
        <dbReference type="HAMAP-Rule" id="MF_01318"/>
    </source>
</evidence>
<evidence type="ECO:0000305" key="2"/>
<feature type="chain" id="PRO_0000308126" description="Large ribosomal subunit protein uL1">
    <location>
        <begin position="1"/>
        <end position="235"/>
    </location>
</feature>